<name>GLTB_SPIOL</name>
<dbReference type="EC" id="1.4.7.1" evidence="8"/>
<dbReference type="EMBL" id="AF061515">
    <property type="protein sequence ID" value="AAC26853.1"/>
    <property type="molecule type" value="mRNA"/>
</dbReference>
<dbReference type="EMBL" id="U03006">
    <property type="protein sequence ID" value="AAA18948.1"/>
    <property type="molecule type" value="mRNA"/>
</dbReference>
<dbReference type="EMBL" id="KQ141620">
    <property type="protein sequence ID" value="KNA18696.1"/>
    <property type="molecule type" value="Genomic_DNA"/>
</dbReference>
<dbReference type="PIR" id="S67496">
    <property type="entry name" value="S67496"/>
</dbReference>
<dbReference type="SMR" id="Q43155"/>
<dbReference type="STRING" id="3562.A0A0K9RGS1"/>
<dbReference type="MoonProt" id="Q43155"/>
<dbReference type="BRENDA" id="1.4.7.1">
    <property type="organism ID" value="5812"/>
</dbReference>
<dbReference type="UniPathway" id="UPA00045"/>
<dbReference type="UniPathway" id="UPA00634">
    <property type="reaction ID" value="UER00691"/>
</dbReference>
<dbReference type="Proteomes" id="UP001155700">
    <property type="component" value="Unplaced"/>
</dbReference>
<dbReference type="GO" id="GO:0009570">
    <property type="term" value="C:chloroplast stroma"/>
    <property type="evidence" value="ECO:0000314"/>
    <property type="project" value="CAFA"/>
</dbReference>
<dbReference type="GO" id="GO:0051538">
    <property type="term" value="F:3 iron, 4 sulfur cluster binding"/>
    <property type="evidence" value="ECO:0007669"/>
    <property type="project" value="UniProtKB-KW"/>
</dbReference>
<dbReference type="GO" id="GO:0019899">
    <property type="term" value="F:enzyme binding"/>
    <property type="evidence" value="ECO:0000353"/>
    <property type="project" value="CAFA"/>
</dbReference>
<dbReference type="GO" id="GO:0016041">
    <property type="term" value="F:glutamate synthase (ferredoxin) activity"/>
    <property type="evidence" value="ECO:0000314"/>
    <property type="project" value="CAFA"/>
</dbReference>
<dbReference type="GO" id="GO:0015930">
    <property type="term" value="F:glutamate synthase activity"/>
    <property type="evidence" value="ECO:0000318"/>
    <property type="project" value="GO_Central"/>
</dbReference>
<dbReference type="GO" id="GO:0046872">
    <property type="term" value="F:metal ion binding"/>
    <property type="evidence" value="ECO:0007669"/>
    <property type="project" value="UniProtKB-KW"/>
</dbReference>
<dbReference type="GO" id="GO:0019676">
    <property type="term" value="P:ammonia assimilation cycle"/>
    <property type="evidence" value="ECO:0000318"/>
    <property type="project" value="GO_Central"/>
</dbReference>
<dbReference type="GO" id="GO:0006537">
    <property type="term" value="P:glutamate biosynthetic process"/>
    <property type="evidence" value="ECO:0000318"/>
    <property type="project" value="GO_Central"/>
</dbReference>
<dbReference type="GO" id="GO:0097054">
    <property type="term" value="P:L-glutamate biosynthetic process"/>
    <property type="evidence" value="ECO:0000314"/>
    <property type="project" value="CAFA"/>
</dbReference>
<dbReference type="CDD" id="cd00982">
    <property type="entry name" value="gltB_C"/>
    <property type="match status" value="1"/>
</dbReference>
<dbReference type="CDD" id="cd00713">
    <property type="entry name" value="GltS"/>
    <property type="match status" value="1"/>
</dbReference>
<dbReference type="CDD" id="cd02808">
    <property type="entry name" value="GltS_FMN"/>
    <property type="match status" value="1"/>
</dbReference>
<dbReference type="FunFam" id="2.160.20.60:FF:000003">
    <property type="entry name" value="Ferredoxin-dependent glutamate synthase, chloroplastic"/>
    <property type="match status" value="1"/>
</dbReference>
<dbReference type="FunFam" id="3.20.20.70:FF:000084">
    <property type="entry name" value="Ferredoxin-dependent glutamate synthase, chloroplastic"/>
    <property type="match status" value="1"/>
</dbReference>
<dbReference type="FunFam" id="3.20.20.70:FF:000127">
    <property type="entry name" value="Ferredoxin-dependent glutamate synthase, chloroplastic"/>
    <property type="match status" value="1"/>
</dbReference>
<dbReference type="FunFam" id="3.60.20.10:FF:000001">
    <property type="entry name" value="Glutamate synthase, large subunit"/>
    <property type="match status" value="1"/>
</dbReference>
<dbReference type="Gene3D" id="3.20.20.70">
    <property type="entry name" value="Aldolase class I"/>
    <property type="match status" value="2"/>
</dbReference>
<dbReference type="Gene3D" id="2.160.20.60">
    <property type="entry name" value="Glutamate synthase, alpha subunit, C-terminal domain"/>
    <property type="match status" value="1"/>
</dbReference>
<dbReference type="Gene3D" id="3.60.20.10">
    <property type="entry name" value="Glutamine Phosphoribosylpyrophosphate, subunit 1, domain 1"/>
    <property type="match status" value="1"/>
</dbReference>
<dbReference type="InterPro" id="IPR013785">
    <property type="entry name" value="Aldolase_TIM"/>
</dbReference>
<dbReference type="InterPro" id="IPR050711">
    <property type="entry name" value="ET-N_metabolism_enzyme"/>
</dbReference>
<dbReference type="InterPro" id="IPR017932">
    <property type="entry name" value="GATase_2_dom"/>
</dbReference>
<dbReference type="InterPro" id="IPR002489">
    <property type="entry name" value="Glu_synth_asu_C"/>
</dbReference>
<dbReference type="InterPro" id="IPR036485">
    <property type="entry name" value="Glu_synth_asu_C_sf"/>
</dbReference>
<dbReference type="InterPro" id="IPR006982">
    <property type="entry name" value="Glu_synth_centr_N"/>
</dbReference>
<dbReference type="InterPro" id="IPR002932">
    <property type="entry name" value="Glu_synthdom"/>
</dbReference>
<dbReference type="InterPro" id="IPR029055">
    <property type="entry name" value="Ntn_hydrolases_N"/>
</dbReference>
<dbReference type="NCBIfam" id="NF008730">
    <property type="entry name" value="PRK11750.1"/>
    <property type="match status" value="1"/>
</dbReference>
<dbReference type="PANTHER" id="PTHR11938">
    <property type="entry name" value="FAD NADPH DEHYDROGENASE/OXIDOREDUCTASE"/>
    <property type="match status" value="1"/>
</dbReference>
<dbReference type="PANTHER" id="PTHR11938:SF133">
    <property type="entry name" value="GLUTAMATE SYNTHASE (NADH)"/>
    <property type="match status" value="1"/>
</dbReference>
<dbReference type="Pfam" id="PF00310">
    <property type="entry name" value="GATase_2"/>
    <property type="match status" value="1"/>
</dbReference>
<dbReference type="Pfam" id="PF04898">
    <property type="entry name" value="Glu_syn_central"/>
    <property type="match status" value="1"/>
</dbReference>
<dbReference type="Pfam" id="PF01645">
    <property type="entry name" value="Glu_synthase"/>
    <property type="match status" value="1"/>
</dbReference>
<dbReference type="Pfam" id="PF01493">
    <property type="entry name" value="GXGXG"/>
    <property type="match status" value="1"/>
</dbReference>
<dbReference type="SUPFAM" id="SSF69336">
    <property type="entry name" value="Alpha subunit of glutamate synthase, C-terminal domain"/>
    <property type="match status" value="1"/>
</dbReference>
<dbReference type="SUPFAM" id="SSF51395">
    <property type="entry name" value="FMN-linked oxidoreductases"/>
    <property type="match status" value="1"/>
</dbReference>
<dbReference type="SUPFAM" id="SSF56235">
    <property type="entry name" value="N-terminal nucleophile aminohydrolases (Ntn hydrolases)"/>
    <property type="match status" value="1"/>
</dbReference>
<dbReference type="PROSITE" id="PS51278">
    <property type="entry name" value="GATASE_TYPE_2"/>
    <property type="match status" value="1"/>
</dbReference>
<evidence type="ECO:0000250" key="1"/>
<evidence type="ECO:0000255" key="2"/>
<evidence type="ECO:0000255" key="3">
    <source>
        <dbReference type="PROSITE-ProRule" id="PRU00609"/>
    </source>
</evidence>
<evidence type="ECO:0000269" key="4">
    <source>
    </source>
</evidence>
<evidence type="ECO:0000269" key="5">
    <source>
    </source>
</evidence>
<evidence type="ECO:0000269" key="6">
    <source>
    </source>
</evidence>
<evidence type="ECO:0000269" key="7">
    <source>
    </source>
</evidence>
<evidence type="ECO:0000269" key="8">
    <source>
    </source>
</evidence>
<evidence type="ECO:0000303" key="9">
    <source>
    </source>
</evidence>
<evidence type="ECO:0000305" key="10"/>
<evidence type="ECO:0000312" key="11">
    <source>
        <dbReference type="EMBL" id="KNA18696.1"/>
    </source>
</evidence>
<reference key="1">
    <citation type="submission" date="1998-04" db="EMBL/GenBank/DDBJ databases">
        <authorList>
            <person name="Dincturk H.B."/>
            <person name="Knaff D.B."/>
        </authorList>
    </citation>
    <scope>NUCLEOTIDE SEQUENCE [MRNA] OF 105-1621</scope>
    <source>
        <strain>cv. Melody</strain>
        <tissue>Leaf</tissue>
    </source>
</reference>
<reference key="2">
    <citation type="journal article" date="1994" name="Biochim. Biophys. Acta">
        <title>Cloning and sequencing of the gene encoding spinach ferredoxin-dependent glutamate synthase.</title>
        <authorList>
            <person name="Nalbantoglu B."/>
            <person name="Hirasawa M."/>
            <person name="Moomaw C."/>
            <person name="Nguyen H."/>
            <person name="Knaff D.B."/>
            <person name="Allen R."/>
        </authorList>
    </citation>
    <scope>NUCLEOTIDE SEQUENCE [MRNA] OF 140-1621</scope>
    <scope>PROTEIN SEQUENCE OF 105-128; 213-218; 351-362; 376-391; 634-644; 646-651; 862-869; 890-903; 1049-1057; 1092-204; 1108-1110; 1134-1149; 1174-1183; 1299-1304 AND 1372-1375</scope>
    <scope>TISSUE SPECIFICITY</scope>
    <source>
        <tissue>Leaf</tissue>
    </source>
</reference>
<reference key="3">
    <citation type="journal article" date="2014" name="Nature">
        <title>The genome of the recently domesticated crop plant sugar beet (Beta vulgaris).</title>
        <authorList>
            <person name="Dohm J.C."/>
            <person name="Minoche A.E."/>
            <person name="Holtgraewe D."/>
            <person name="Capella-Gutierrez S."/>
            <person name="Zakrzewski F."/>
            <person name="Tafer H."/>
            <person name="Rupp O."/>
            <person name="Soerensen T.R."/>
            <person name="Stracke R."/>
            <person name="Reinhardt R."/>
            <person name="Goesmann A."/>
            <person name="Kraft T."/>
            <person name="Schulz B."/>
            <person name="Stadler P.F."/>
            <person name="Schmidt T."/>
            <person name="Gabaldon T."/>
            <person name="Lehrach H."/>
            <person name="Weisshaar B."/>
            <person name="Himmelbauer H."/>
        </authorList>
    </citation>
    <scope>NUCLEOTIDE SEQUENCE [LARGE SCALE GENOMIC DNA]</scope>
    <source>
        <strain>cv. Viroflay</strain>
    </source>
</reference>
<reference key="4">
    <citation type="journal article" date="1991" name="Arch. Biochem. Biophys.">
        <title>The interaction of ferredoxin and glutamate synthase: cross-linking and immunological studies.</title>
        <authorList>
            <person name="Hirasawa M."/>
            <person name="Chang K.T."/>
            <person name="Knaff D.B."/>
        </authorList>
    </citation>
    <scope>INTERACTION WITH FERREDOXIN</scope>
</reference>
<reference key="5">
    <citation type="journal article" date="1996" name="Arch. Biochem. Biophys.">
        <title>Oxidation-reduction and transient kinetic studies of spinach ferredoxin-dependent glutamate synthase.</title>
        <authorList>
            <person name="Hirasawa M."/>
            <person name="Hurley J.K."/>
            <person name="Salamon Z."/>
            <person name="Tollin G."/>
            <person name="Knaff D.B."/>
        </authorList>
    </citation>
    <scope>FUNCTION</scope>
    <scope>COFACTOR</scope>
</reference>
<reference key="6">
    <citation type="journal article" date="1998" name="Biochim. Biophys. Acta">
        <title>The role of aromatic and acidic amino acids in the electron transfer reaction catalyzed by spinach ferredoxin-dependent glutamate synthase.</title>
        <authorList>
            <person name="Hirasawa M."/>
            <person name="Hurley J.K."/>
            <person name="Salamon Z."/>
            <person name="Tollin G."/>
            <person name="Markley J.L."/>
            <person name="Cheng H."/>
            <person name="Xia B."/>
            <person name="Knaff D.B."/>
        </authorList>
    </citation>
    <scope>FUNCTION</scope>
    <scope>CATALYTIC ACTIVITY</scope>
    <scope>ACTIVITY REGULATION</scope>
</reference>
<reference key="7">
    <citation type="journal article" date="2005" name="Arch. Biochem. Biophys.">
        <title>Ferredoxin-dependent glutamate synthase moonlights in plant sulfolipid biosynthesis by forming a complex with SQD1.</title>
        <authorList>
            <person name="Shimojima M."/>
            <person name="Hoffmann-Benning S."/>
            <person name="Garavito R.M."/>
            <person name="Benning C."/>
        </authorList>
    </citation>
    <scope>FUNCTION</scope>
    <scope>INTERACTION WITH SQD1</scope>
    <scope>3D-STRUCTURE MODELING</scope>
</reference>
<comment type="function">
    <text evidence="4 7 8">Catalyzes the reductive conversion of 2-oxoglutarate plus glutamine to two molecules of glutamate, using reduced ferredoxin as the electron donor (PubMed:9507092). Contains one FMN but no FAD (PubMed:8651698). The FMN-binding domain is also involved in the delivery of sulfite to the reaction center of SQD1 (PubMed:15752726).</text>
</comment>
<comment type="catalytic activity">
    <reaction evidence="8">
        <text>2 oxidized [2Fe-2S]-[ferredoxin] + 2 L-glutamate = L-glutamine + 2 reduced [2Fe-2S]-[ferredoxin] + 2-oxoglutarate + 2 H(+)</text>
        <dbReference type="Rhea" id="RHEA:12128"/>
        <dbReference type="Rhea" id="RHEA-COMP:10000"/>
        <dbReference type="Rhea" id="RHEA-COMP:10001"/>
        <dbReference type="ChEBI" id="CHEBI:15378"/>
        <dbReference type="ChEBI" id="CHEBI:16810"/>
        <dbReference type="ChEBI" id="CHEBI:29985"/>
        <dbReference type="ChEBI" id="CHEBI:33737"/>
        <dbReference type="ChEBI" id="CHEBI:33738"/>
        <dbReference type="ChEBI" id="CHEBI:58359"/>
        <dbReference type="EC" id="1.4.7.1"/>
    </reaction>
    <physiologicalReaction direction="right-to-left" evidence="8">
        <dbReference type="Rhea" id="RHEA:12130"/>
    </physiologicalReaction>
</comment>
<comment type="cofactor">
    <cofactor evidence="7">
        <name>[3Fe-4S] cluster</name>
        <dbReference type="ChEBI" id="CHEBI:21137"/>
    </cofactor>
    <text evidence="7">Binds 1 [3Fe-4S] cluster.</text>
</comment>
<comment type="cofactor">
    <cofactor evidence="7">
        <name>FMN</name>
        <dbReference type="ChEBI" id="CHEBI:58210"/>
    </cofactor>
</comment>
<comment type="activity regulation">
    <text evidence="8">Inhibited by N-bromosuccinimide, which is specific for modification of tryptophan residues probably involved in the electron transfer from ferredoxin.</text>
</comment>
<comment type="pathway">
    <text evidence="10">Amino-acid biosynthesis; L-glutamate biosynthesis via GLT pathway; L-glutamate from 2-oxoglutarate and L-glutamine (ferredoxin route): step 1/1.</text>
</comment>
<comment type="pathway">
    <text evidence="10">Energy metabolism; nitrogen metabolism.</text>
</comment>
<comment type="subunit">
    <text evidence="4 5">Interacts with ferredoxin (PubMed:1910284). Interacts (via FMN-binding domain) with SQD1 (PubMed:15752726).</text>
</comment>
<comment type="subcellular location">
    <subcellularLocation>
        <location evidence="2">Plastid</location>
        <location evidence="2">Chloroplast stroma</location>
    </subcellularLocation>
</comment>
<comment type="tissue specificity">
    <text evidence="6">Expressed in young leaves. Not detected in mature leaves.</text>
</comment>
<comment type="similarity">
    <text evidence="10">Belongs to the glutamate synthase family.</text>
</comment>
<organism>
    <name type="scientific">Spinacia oleracea</name>
    <name type="common">Spinach</name>
    <dbReference type="NCBI Taxonomy" id="3562"/>
    <lineage>
        <taxon>Eukaryota</taxon>
        <taxon>Viridiplantae</taxon>
        <taxon>Streptophyta</taxon>
        <taxon>Embryophyta</taxon>
        <taxon>Tracheophyta</taxon>
        <taxon>Spermatophyta</taxon>
        <taxon>Magnoliopsida</taxon>
        <taxon>eudicotyledons</taxon>
        <taxon>Gunneridae</taxon>
        <taxon>Pentapetalae</taxon>
        <taxon>Caryophyllales</taxon>
        <taxon>Chenopodiaceae</taxon>
        <taxon>Chenopodioideae</taxon>
        <taxon>Anserineae</taxon>
        <taxon>Spinacia</taxon>
    </lineage>
</organism>
<gene>
    <name evidence="10" type="primary">FdGOGAT</name>
    <name evidence="11" type="ORF">SOVF_067910</name>
</gene>
<proteinExistence type="evidence at protein level"/>
<protein>
    <recommendedName>
        <fullName evidence="9">Ferredoxin-dependent glutamate synthase, chloroplastic</fullName>
        <ecNumber evidence="8">1.4.7.1</ecNumber>
    </recommendedName>
    <alternativeName>
        <fullName evidence="10">Fd-GOGAT</fullName>
        <shortName evidence="10">SoFdGOGAT</shortName>
    </alternativeName>
</protein>
<feature type="transit peptide" description="Chloroplast" evidence="2">
    <location>
        <begin position="1"/>
        <end position="57"/>
    </location>
</feature>
<feature type="chain" id="PRO_0000170796" description="Ferredoxin-dependent glutamate synthase, chloroplastic">
    <location>
        <begin position="58"/>
        <end position="1621"/>
    </location>
</feature>
<feature type="domain" description="Glutamine amidotransferase type-2" evidence="3">
    <location>
        <begin position="105"/>
        <end position="504"/>
    </location>
</feature>
<feature type="active site" description="Nucleophile" evidence="3">
    <location>
        <position position="105"/>
    </location>
</feature>
<feature type="binding site" evidence="1">
    <location>
        <begin position="1183"/>
        <end position="1240"/>
    </location>
    <ligand>
        <name>FMN</name>
        <dbReference type="ChEBI" id="CHEBI:58210"/>
    </ligand>
</feature>
<feature type="binding site" evidence="1">
    <location>
        <position position="1236"/>
    </location>
    <ligand>
        <name>[3Fe-4S] cluster</name>
        <dbReference type="ChEBI" id="CHEBI:21137"/>
    </ligand>
</feature>
<feature type="binding site" evidence="1">
    <location>
        <position position="1242"/>
    </location>
    <ligand>
        <name>[3Fe-4S] cluster</name>
        <dbReference type="ChEBI" id="CHEBI:21137"/>
    </ligand>
</feature>
<feature type="binding site" evidence="1">
    <location>
        <position position="1247"/>
    </location>
    <ligand>
        <name>[3Fe-4S] cluster</name>
        <dbReference type="ChEBI" id="CHEBI:21137"/>
    </ligand>
</feature>
<feature type="sequence conflict" description="In Ref. 1; AAC26853 and 2; AAA18948." ref="1 2">
    <original>R</original>
    <variation>A</variation>
    <location>
        <position position="459"/>
    </location>
</feature>
<feature type="sequence conflict" description="In Ref. 1; AAC26853 and 2; AAA18948." ref="1 2">
    <original>K</original>
    <variation>N</variation>
    <location>
        <position position="810"/>
    </location>
</feature>
<feature type="sequence conflict" description="In Ref. 1; AAC26853 and 2; AAA18948." ref="1 2">
    <original>E</original>
    <variation>A</variation>
    <location>
        <position position="1128"/>
    </location>
</feature>
<accession>Q43155</accession>
<accession>A0A0K9RGS1</accession>
<accession>O81234</accession>
<sequence length="1621" mass="176752">MALQSAPKLLYSSPSPSVFSANERRVAFSDFVGLSKKRSRRRRIAGTFRNFPALSAVSSAIKAVVDVDRAHHSTDSGSPTVSTSSHPLDQQVVNLEDILAERGACGVGFIANLDNKGSFQIVKDALTALGCMEHRGGCGSDNDSGDGSGVMTAIPWDLFNDWGKDQGIGPFDRSHTGVGMVFLPKDDLLAEEAKKVVLDTFAQEGIEVIGWRSVPTNVSVVGRNAKETMPNIQQVFVRIIKEDSTDDIERELYICRKLIERAASSHTWASELYFCSLSNQTIIYKGMLRSEVLGMFYYDLQNERYTSPFAIYHRRYSTNTSPRWPLAQPMRFLGHNGEINTIQGNLNWMRSREPSIQSPVWRGRENEIRPYGNPKASDSANLDSAAELLIRSGRTPEEALMILVPEAYKNHPTLMIKYPEAVDFYDYYKGQMETWDGPALLLFSDGKTVGACLDRNGLRPARYWRTVDNVVYVASEVGVLPMDESKVTMKGRLGPGMMISVDLSSGQVYENTEVKKRVASSNPYGKWVKENLRSLKAVNFLSRALLENDTILRNQQAFGYSSEDVQMVIESMASQGKEPTFCMGDDIPLAVMSQKPHMLYDYFKQRFAQVTNPAIDPLREGLVMSLEVNIGKRGNILEVGPENASQVILPSPVLNEGELEALVNDPLLKAQMLPIFFDIRKGVEGTLEKRLNRLCEAADEAVRNGSQMLVLSDRSEELEPTRPAIPILLAVGAVHQHLIQNGLRMYTSIVVDTAQCFSTHQFACLIGYGASAICPYLALETCRQWRLSNKTVNLMRTGKIPTVTIEQAQKNFCKAVKSGLLKILSKMGISLLSSYCGAQIFEIYGLGKDVVDIAFQGSVSKMGGLTLDELARETLSFWVKAFSEDTAKRLENFGFIQFRPGGEYHVNNPEMSKLLHKAVRNKSESAYAVYQQHLANRPVSVLRDLLEFKSDRAPISVGKVEPATSIVERFCTGGMSLGAISRETHEAIAIAMNRLGGKSNSGEGGEDPIRWRPLTDVVDGYSSTLPHLKGLQNGDTATSAIKQVASGRFGVTPTFLVNADQIEIKIAQGAKPGEGGQLPGKKVSAYIARLRNSKPGVPLISPPPHHDIYSIEDLAQLIYDLHQINPKEKVSVKLVAEAGIGTVASGVAKGNADIIQVSGHDGGTGASPISSIKHAGGPWELGLSETHQTLISNGLRERVILRVDGGLKCGVDVMMAAAMGADEYGFGSLAMIATGCVMARICHTNNCPVGVASQREELRARFPGVPGDLVNFFLYVAEEVRGILAQLGFEKLDDIIGRTDILKPRDISLMKTQHLDLSYILASAGLPTMSSTAIRKQEVHTNGPVLDDQILSDPEIIDAIENEKIVNKTVKIFNVDRAVCGRIAGVIAKKYGDTGFAGQLNLTFEGSAGQSFAVFLTPGMNIRLVGESNDYVGKGMAGGELIVTPAENPGFRPEDATIVGNTCLYGATGGQIFVRGKAGERFAVRNSLAEAVVEGTGDHCCEYMTGGCVVILGKVGRNVAAGMTGGLAYILDEDDTLIPKVNKEIVKIQRVTAPVGQMQLKNLIEAHVEKTGSSKGASILKDWDKYLPLFWQLVPPSEEDTPEASAMFEQMTSEGASLQSA</sequence>
<keyword id="KW-0003">3Fe-4S</keyword>
<keyword id="KW-0028">Amino-acid biosynthesis</keyword>
<keyword id="KW-0150">Chloroplast</keyword>
<keyword id="KW-0903">Direct protein sequencing</keyword>
<keyword id="KW-0285">Flavoprotein</keyword>
<keyword id="KW-0288">FMN</keyword>
<keyword id="KW-0314">Glutamate biosynthesis</keyword>
<keyword id="KW-0315">Glutamine amidotransferase</keyword>
<keyword id="KW-0408">Iron</keyword>
<keyword id="KW-0411">Iron-sulfur</keyword>
<keyword id="KW-0479">Metal-binding</keyword>
<keyword id="KW-0560">Oxidoreductase</keyword>
<keyword id="KW-0934">Plastid</keyword>
<keyword id="KW-1185">Reference proteome</keyword>
<keyword id="KW-0809">Transit peptide</keyword>